<reference key="1">
    <citation type="submission" date="2008-04" db="EMBL/GenBank/DDBJ databases">
        <title>Complete sequence of Yersinia pseudotuberculosis PB1/+.</title>
        <authorList>
            <person name="Copeland A."/>
            <person name="Lucas S."/>
            <person name="Lapidus A."/>
            <person name="Glavina del Rio T."/>
            <person name="Dalin E."/>
            <person name="Tice H."/>
            <person name="Bruce D."/>
            <person name="Goodwin L."/>
            <person name="Pitluck S."/>
            <person name="Munk A.C."/>
            <person name="Brettin T."/>
            <person name="Detter J.C."/>
            <person name="Han C."/>
            <person name="Tapia R."/>
            <person name="Schmutz J."/>
            <person name="Larimer F."/>
            <person name="Land M."/>
            <person name="Hauser L."/>
            <person name="Challacombe J.F."/>
            <person name="Green L."/>
            <person name="Lindler L.E."/>
            <person name="Nikolich M.P."/>
            <person name="Richardson P."/>
        </authorList>
    </citation>
    <scope>NUCLEOTIDE SEQUENCE [LARGE SCALE GENOMIC DNA]</scope>
    <source>
        <strain>PB1/+</strain>
    </source>
</reference>
<gene>
    <name evidence="1" type="primary">galK</name>
    <name type="ordered locus">YPTS_1247</name>
</gene>
<protein>
    <recommendedName>
        <fullName evidence="1">Galactokinase</fullName>
        <ecNumber evidence="1">2.7.1.6</ecNumber>
    </recommendedName>
    <alternativeName>
        <fullName evidence="1">Galactose kinase</fullName>
    </alternativeName>
</protein>
<evidence type="ECO:0000255" key="1">
    <source>
        <dbReference type="HAMAP-Rule" id="MF_00246"/>
    </source>
</evidence>
<sequence>MSLKQHTQTIFRQQFDRESDITIKAPGRVNLIGEHTDYNDGFVLPCAINYETVISCGKRGDRQIRVIAADYENQQDIFSLDAPIVPHPEYRWADYVRGVVKHLQMRNADFGGADLVICGNVPQGAGLSSSASLEVAVGQALQSLYQLPLSGVELALNGQEAENQFVGCNCGIMDQLISALGKKDHALLIDCRTLETRAVPMPENMAVVIINSNIQRGLVDSEYNTRRQQCEAAARFFGVKALRDVEPSLFFSIQDELDPVVAKRARHVISENARTLAAADALAAGNLKLMGQLMQESHISMRDDFEITVPPIDRLVEIVKSVIGDQGGVRMTGGGFGGCIVALMPLELVEQVRTTVAQEYPAHSGGKKETFYVCQASQGAGLC</sequence>
<name>GAL1_YERPB</name>
<proteinExistence type="inferred from homology"/>
<keyword id="KW-0067">ATP-binding</keyword>
<keyword id="KW-0119">Carbohydrate metabolism</keyword>
<keyword id="KW-0963">Cytoplasm</keyword>
<keyword id="KW-0299">Galactose metabolism</keyword>
<keyword id="KW-0418">Kinase</keyword>
<keyword id="KW-0460">Magnesium</keyword>
<keyword id="KW-0479">Metal-binding</keyword>
<keyword id="KW-0547">Nucleotide-binding</keyword>
<keyword id="KW-0808">Transferase</keyword>
<feature type="chain" id="PRO_1000100849" description="Galactokinase">
    <location>
        <begin position="1"/>
        <end position="383"/>
    </location>
</feature>
<feature type="active site" description="Proton acceptor" evidence="1">
    <location>
        <position position="174"/>
    </location>
</feature>
<feature type="binding site" evidence="1">
    <location>
        <begin position="34"/>
        <end position="37"/>
    </location>
    <ligand>
        <name>substrate</name>
    </ligand>
</feature>
<feature type="binding site" evidence="1">
    <location>
        <begin position="124"/>
        <end position="130"/>
    </location>
    <ligand>
        <name>ATP</name>
        <dbReference type="ChEBI" id="CHEBI:30616"/>
    </ligand>
</feature>
<feature type="binding site" evidence="1">
    <location>
        <position position="130"/>
    </location>
    <ligand>
        <name>Mg(2+)</name>
        <dbReference type="ChEBI" id="CHEBI:18420"/>
    </ligand>
</feature>
<feature type="binding site" evidence="1">
    <location>
        <position position="162"/>
    </location>
    <ligand>
        <name>Mg(2+)</name>
        <dbReference type="ChEBI" id="CHEBI:18420"/>
    </ligand>
</feature>
<feature type="binding site" evidence="1">
    <location>
        <position position="223"/>
    </location>
    <ligand>
        <name>substrate</name>
    </ligand>
</feature>
<feature type="site" description="Transition state stabilizer" evidence="1">
    <location>
        <position position="28"/>
    </location>
</feature>
<dbReference type="EC" id="2.7.1.6" evidence="1"/>
<dbReference type="EMBL" id="CP001048">
    <property type="protein sequence ID" value="ACC88222.1"/>
    <property type="molecule type" value="Genomic_DNA"/>
</dbReference>
<dbReference type="RefSeq" id="WP_011191950.1">
    <property type="nucleotide sequence ID" value="NZ_CP009780.1"/>
</dbReference>
<dbReference type="SMR" id="B2K8R6"/>
<dbReference type="KEGG" id="ypb:YPTS_1247"/>
<dbReference type="PATRIC" id="fig|502801.10.peg.596"/>
<dbReference type="UniPathway" id="UPA00214"/>
<dbReference type="GO" id="GO:0005829">
    <property type="term" value="C:cytosol"/>
    <property type="evidence" value="ECO:0007669"/>
    <property type="project" value="TreeGrafter"/>
</dbReference>
<dbReference type="GO" id="GO:0005524">
    <property type="term" value="F:ATP binding"/>
    <property type="evidence" value="ECO:0007669"/>
    <property type="project" value="UniProtKB-UniRule"/>
</dbReference>
<dbReference type="GO" id="GO:0004335">
    <property type="term" value="F:galactokinase activity"/>
    <property type="evidence" value="ECO:0007669"/>
    <property type="project" value="UniProtKB-UniRule"/>
</dbReference>
<dbReference type="GO" id="GO:0000287">
    <property type="term" value="F:magnesium ion binding"/>
    <property type="evidence" value="ECO:0007669"/>
    <property type="project" value="UniProtKB-UniRule"/>
</dbReference>
<dbReference type="GO" id="GO:0006012">
    <property type="term" value="P:galactose metabolic process"/>
    <property type="evidence" value="ECO:0007669"/>
    <property type="project" value="UniProtKB-UniRule"/>
</dbReference>
<dbReference type="FunFam" id="3.30.230.10:FF:000017">
    <property type="entry name" value="Galactokinase"/>
    <property type="match status" value="1"/>
</dbReference>
<dbReference type="FunFam" id="3.30.70.890:FF:000001">
    <property type="entry name" value="Galactokinase"/>
    <property type="match status" value="1"/>
</dbReference>
<dbReference type="Gene3D" id="3.30.230.10">
    <property type="match status" value="1"/>
</dbReference>
<dbReference type="Gene3D" id="3.30.70.890">
    <property type="entry name" value="GHMP kinase, C-terminal domain"/>
    <property type="match status" value="1"/>
</dbReference>
<dbReference type="HAMAP" id="MF_00246">
    <property type="entry name" value="Galactokinase"/>
    <property type="match status" value="1"/>
</dbReference>
<dbReference type="InterPro" id="IPR000705">
    <property type="entry name" value="Galactokinase"/>
</dbReference>
<dbReference type="InterPro" id="IPR022963">
    <property type="entry name" value="Galactokinase_bac"/>
</dbReference>
<dbReference type="InterPro" id="IPR019741">
    <property type="entry name" value="Galactokinase_CS"/>
</dbReference>
<dbReference type="InterPro" id="IPR019539">
    <property type="entry name" value="GalKase_N"/>
</dbReference>
<dbReference type="InterPro" id="IPR013750">
    <property type="entry name" value="GHMP_kinase_C_dom"/>
</dbReference>
<dbReference type="InterPro" id="IPR036554">
    <property type="entry name" value="GHMP_kinase_C_sf"/>
</dbReference>
<dbReference type="InterPro" id="IPR006204">
    <property type="entry name" value="GHMP_kinase_N_dom"/>
</dbReference>
<dbReference type="InterPro" id="IPR006203">
    <property type="entry name" value="GHMP_knse_ATP-bd_CS"/>
</dbReference>
<dbReference type="InterPro" id="IPR006206">
    <property type="entry name" value="Mevalonate/galactokinase"/>
</dbReference>
<dbReference type="InterPro" id="IPR020568">
    <property type="entry name" value="Ribosomal_Su5_D2-typ_SF"/>
</dbReference>
<dbReference type="InterPro" id="IPR014721">
    <property type="entry name" value="Ribsml_uS5_D2-typ_fold_subgr"/>
</dbReference>
<dbReference type="NCBIfam" id="TIGR00131">
    <property type="entry name" value="gal_kin"/>
    <property type="match status" value="1"/>
</dbReference>
<dbReference type="NCBIfam" id="NF003472">
    <property type="entry name" value="PRK05101.1"/>
    <property type="match status" value="1"/>
</dbReference>
<dbReference type="PANTHER" id="PTHR10457:SF7">
    <property type="entry name" value="GALACTOKINASE-RELATED"/>
    <property type="match status" value="1"/>
</dbReference>
<dbReference type="PANTHER" id="PTHR10457">
    <property type="entry name" value="MEVALONATE KINASE/GALACTOKINASE"/>
    <property type="match status" value="1"/>
</dbReference>
<dbReference type="Pfam" id="PF10509">
    <property type="entry name" value="GalKase_gal_bdg"/>
    <property type="match status" value="1"/>
</dbReference>
<dbReference type="Pfam" id="PF08544">
    <property type="entry name" value="GHMP_kinases_C"/>
    <property type="match status" value="1"/>
</dbReference>
<dbReference type="Pfam" id="PF00288">
    <property type="entry name" value="GHMP_kinases_N"/>
    <property type="match status" value="1"/>
</dbReference>
<dbReference type="PIRSF" id="PIRSF000530">
    <property type="entry name" value="Galactokinase"/>
    <property type="match status" value="1"/>
</dbReference>
<dbReference type="PRINTS" id="PR00473">
    <property type="entry name" value="GALCTOKINASE"/>
</dbReference>
<dbReference type="PRINTS" id="PR00959">
    <property type="entry name" value="MEVGALKINASE"/>
</dbReference>
<dbReference type="SUPFAM" id="SSF55060">
    <property type="entry name" value="GHMP Kinase, C-terminal domain"/>
    <property type="match status" value="1"/>
</dbReference>
<dbReference type="SUPFAM" id="SSF54211">
    <property type="entry name" value="Ribosomal protein S5 domain 2-like"/>
    <property type="match status" value="1"/>
</dbReference>
<dbReference type="PROSITE" id="PS00106">
    <property type="entry name" value="GALACTOKINASE"/>
    <property type="match status" value="1"/>
</dbReference>
<dbReference type="PROSITE" id="PS00627">
    <property type="entry name" value="GHMP_KINASES_ATP"/>
    <property type="match status" value="1"/>
</dbReference>
<accession>B2K8R6</accession>
<organism>
    <name type="scientific">Yersinia pseudotuberculosis serotype IB (strain PB1/+)</name>
    <dbReference type="NCBI Taxonomy" id="502801"/>
    <lineage>
        <taxon>Bacteria</taxon>
        <taxon>Pseudomonadati</taxon>
        <taxon>Pseudomonadota</taxon>
        <taxon>Gammaproteobacteria</taxon>
        <taxon>Enterobacterales</taxon>
        <taxon>Yersiniaceae</taxon>
        <taxon>Yersinia</taxon>
    </lineage>
</organism>
<comment type="function">
    <text evidence="1">Catalyzes the transfer of the gamma-phosphate of ATP to D-galactose to form alpha-D-galactose-1-phosphate (Gal-1-P).</text>
</comment>
<comment type="catalytic activity">
    <reaction evidence="1">
        <text>alpha-D-galactose + ATP = alpha-D-galactose 1-phosphate + ADP + H(+)</text>
        <dbReference type="Rhea" id="RHEA:13553"/>
        <dbReference type="ChEBI" id="CHEBI:15378"/>
        <dbReference type="ChEBI" id="CHEBI:28061"/>
        <dbReference type="ChEBI" id="CHEBI:30616"/>
        <dbReference type="ChEBI" id="CHEBI:58336"/>
        <dbReference type="ChEBI" id="CHEBI:456216"/>
        <dbReference type="EC" id="2.7.1.6"/>
    </reaction>
</comment>
<comment type="pathway">
    <text evidence="1">Carbohydrate metabolism; galactose metabolism.</text>
</comment>
<comment type="subcellular location">
    <subcellularLocation>
        <location evidence="1">Cytoplasm</location>
    </subcellularLocation>
</comment>
<comment type="similarity">
    <text evidence="1">Belongs to the GHMP kinase family. GalK subfamily.</text>
</comment>